<keyword id="KW-0963">Cytoplasm</keyword>
<keyword id="KW-0460">Magnesium</keyword>
<keyword id="KW-0479">Metal-binding</keyword>
<keyword id="KW-0566">Pantothenate biosynthesis</keyword>
<keyword id="KW-1185">Reference proteome</keyword>
<keyword id="KW-0808">Transferase</keyword>
<name>PANB_SHEAM</name>
<protein>
    <recommendedName>
        <fullName evidence="1">3-methyl-2-oxobutanoate hydroxymethyltransferase</fullName>
        <ecNumber evidence="1">2.1.2.11</ecNumber>
    </recommendedName>
    <alternativeName>
        <fullName evidence="1">Ketopantoate hydroxymethyltransferase</fullName>
        <shortName evidence="1">KPHMT</shortName>
    </alternativeName>
</protein>
<gene>
    <name evidence="1" type="primary">panB</name>
    <name type="ordered locus">Sama_0776</name>
</gene>
<reference key="1">
    <citation type="submission" date="2006-12" db="EMBL/GenBank/DDBJ databases">
        <title>Complete sequence of Shewanella amazonensis SB2B.</title>
        <authorList>
            <consortium name="US DOE Joint Genome Institute"/>
            <person name="Copeland A."/>
            <person name="Lucas S."/>
            <person name="Lapidus A."/>
            <person name="Barry K."/>
            <person name="Detter J.C."/>
            <person name="Glavina del Rio T."/>
            <person name="Hammon N."/>
            <person name="Israni S."/>
            <person name="Dalin E."/>
            <person name="Tice H."/>
            <person name="Pitluck S."/>
            <person name="Munk A.C."/>
            <person name="Brettin T."/>
            <person name="Bruce D."/>
            <person name="Han C."/>
            <person name="Tapia R."/>
            <person name="Gilna P."/>
            <person name="Schmutz J."/>
            <person name="Larimer F."/>
            <person name="Land M."/>
            <person name="Hauser L."/>
            <person name="Kyrpides N."/>
            <person name="Mikhailova N."/>
            <person name="Fredrickson J."/>
            <person name="Richardson P."/>
        </authorList>
    </citation>
    <scope>NUCLEOTIDE SEQUENCE [LARGE SCALE GENOMIC DNA]</scope>
    <source>
        <strain>ATCC BAA-1098 / SB2B</strain>
    </source>
</reference>
<feature type="chain" id="PRO_0000297367" description="3-methyl-2-oxobutanoate hydroxymethyltransferase">
    <location>
        <begin position="1"/>
        <end position="264"/>
    </location>
</feature>
<feature type="active site" description="Proton acceptor" evidence="1">
    <location>
        <position position="181"/>
    </location>
</feature>
<feature type="binding site" evidence="1">
    <location>
        <begin position="45"/>
        <end position="46"/>
    </location>
    <ligand>
        <name>3-methyl-2-oxobutanoate</name>
        <dbReference type="ChEBI" id="CHEBI:11851"/>
    </ligand>
</feature>
<feature type="binding site" evidence="1">
    <location>
        <position position="45"/>
    </location>
    <ligand>
        <name>Mg(2+)</name>
        <dbReference type="ChEBI" id="CHEBI:18420"/>
    </ligand>
</feature>
<feature type="binding site" evidence="1">
    <location>
        <position position="84"/>
    </location>
    <ligand>
        <name>3-methyl-2-oxobutanoate</name>
        <dbReference type="ChEBI" id="CHEBI:11851"/>
    </ligand>
</feature>
<feature type="binding site" evidence="1">
    <location>
        <position position="84"/>
    </location>
    <ligand>
        <name>Mg(2+)</name>
        <dbReference type="ChEBI" id="CHEBI:18420"/>
    </ligand>
</feature>
<feature type="binding site" evidence="1">
    <location>
        <position position="112"/>
    </location>
    <ligand>
        <name>3-methyl-2-oxobutanoate</name>
        <dbReference type="ChEBI" id="CHEBI:11851"/>
    </ligand>
</feature>
<feature type="binding site" evidence="1">
    <location>
        <position position="114"/>
    </location>
    <ligand>
        <name>Mg(2+)</name>
        <dbReference type="ChEBI" id="CHEBI:18420"/>
    </ligand>
</feature>
<sequence>MSKVTTSTLMKFKQEGKKFTALTAYDASFAAAFDSEGVDVLLVGDSLGMVLQGHEDTLPVTVQDIAYHTRCVRRGISRALLIADLPFMSYATVEQTMTTATALMQAGANMVKLEGGEWLLESVKKLTERGVPVCAHIGLTPQSVHVFGGFKVQGRDADNAQRILNEAKALEAAGAQLLVIECIPASLAKAITEALSIPVIGIGAGKDTDGQILVMHDVLGISSGYIPRFSKNYLKQTGEIRAAVRAFIDEVADGSFPGPEHTFN</sequence>
<evidence type="ECO:0000255" key="1">
    <source>
        <dbReference type="HAMAP-Rule" id="MF_00156"/>
    </source>
</evidence>
<evidence type="ECO:0000305" key="2"/>
<accession>A1S3M7</accession>
<comment type="function">
    <text evidence="1">Catalyzes the reversible reaction in which hydroxymethyl group from 5,10-methylenetetrahydrofolate is transferred onto alpha-ketoisovalerate to form ketopantoate.</text>
</comment>
<comment type="catalytic activity">
    <reaction evidence="1">
        <text>3-methyl-2-oxobutanoate + (6R)-5,10-methylene-5,6,7,8-tetrahydrofolate + H2O = 2-dehydropantoate + (6S)-5,6,7,8-tetrahydrofolate</text>
        <dbReference type="Rhea" id="RHEA:11824"/>
        <dbReference type="ChEBI" id="CHEBI:11561"/>
        <dbReference type="ChEBI" id="CHEBI:11851"/>
        <dbReference type="ChEBI" id="CHEBI:15377"/>
        <dbReference type="ChEBI" id="CHEBI:15636"/>
        <dbReference type="ChEBI" id="CHEBI:57453"/>
        <dbReference type="EC" id="2.1.2.11"/>
    </reaction>
</comment>
<comment type="cofactor">
    <cofactor evidence="1">
        <name>Mg(2+)</name>
        <dbReference type="ChEBI" id="CHEBI:18420"/>
    </cofactor>
    <text evidence="1">Binds 1 Mg(2+) ion per subunit.</text>
</comment>
<comment type="pathway">
    <text evidence="1">Cofactor biosynthesis; (R)-pantothenate biosynthesis; (R)-pantoate from 3-methyl-2-oxobutanoate: step 1/2.</text>
</comment>
<comment type="subunit">
    <text evidence="1">Homodecamer; pentamer of dimers.</text>
</comment>
<comment type="subcellular location">
    <subcellularLocation>
        <location evidence="1">Cytoplasm</location>
    </subcellularLocation>
</comment>
<comment type="similarity">
    <text evidence="1">Belongs to the PanB family.</text>
</comment>
<comment type="sequence caution" evidence="2">
    <conflict type="erroneous initiation">
        <sequence resource="EMBL-CDS" id="ABL98983"/>
    </conflict>
</comment>
<proteinExistence type="inferred from homology"/>
<organism>
    <name type="scientific">Shewanella amazonensis (strain ATCC BAA-1098 / SB2B)</name>
    <dbReference type="NCBI Taxonomy" id="326297"/>
    <lineage>
        <taxon>Bacteria</taxon>
        <taxon>Pseudomonadati</taxon>
        <taxon>Pseudomonadota</taxon>
        <taxon>Gammaproteobacteria</taxon>
        <taxon>Alteromonadales</taxon>
        <taxon>Shewanellaceae</taxon>
        <taxon>Shewanella</taxon>
    </lineage>
</organism>
<dbReference type="EC" id="2.1.2.11" evidence="1"/>
<dbReference type="EMBL" id="CP000507">
    <property type="protein sequence ID" value="ABL98983.1"/>
    <property type="status" value="ALT_INIT"/>
    <property type="molecule type" value="Genomic_DNA"/>
</dbReference>
<dbReference type="RefSeq" id="WP_041409678.1">
    <property type="nucleotide sequence ID" value="NC_008700.1"/>
</dbReference>
<dbReference type="SMR" id="A1S3M7"/>
<dbReference type="STRING" id="326297.Sama_0776"/>
<dbReference type="KEGG" id="saz:Sama_0776"/>
<dbReference type="eggNOG" id="COG0413">
    <property type="taxonomic scope" value="Bacteria"/>
</dbReference>
<dbReference type="HOGENOM" id="CLU_036645_1_0_6"/>
<dbReference type="OrthoDB" id="9781789at2"/>
<dbReference type="UniPathway" id="UPA00028">
    <property type="reaction ID" value="UER00003"/>
</dbReference>
<dbReference type="Proteomes" id="UP000009175">
    <property type="component" value="Chromosome"/>
</dbReference>
<dbReference type="GO" id="GO:0005737">
    <property type="term" value="C:cytoplasm"/>
    <property type="evidence" value="ECO:0007669"/>
    <property type="project" value="UniProtKB-SubCell"/>
</dbReference>
<dbReference type="GO" id="GO:0003864">
    <property type="term" value="F:3-methyl-2-oxobutanoate hydroxymethyltransferase activity"/>
    <property type="evidence" value="ECO:0007669"/>
    <property type="project" value="UniProtKB-UniRule"/>
</dbReference>
<dbReference type="GO" id="GO:0000287">
    <property type="term" value="F:magnesium ion binding"/>
    <property type="evidence" value="ECO:0007669"/>
    <property type="project" value="TreeGrafter"/>
</dbReference>
<dbReference type="GO" id="GO:0015940">
    <property type="term" value="P:pantothenate biosynthetic process"/>
    <property type="evidence" value="ECO:0007669"/>
    <property type="project" value="UniProtKB-UniRule"/>
</dbReference>
<dbReference type="CDD" id="cd06557">
    <property type="entry name" value="KPHMT-like"/>
    <property type="match status" value="1"/>
</dbReference>
<dbReference type="FunFam" id="3.20.20.60:FF:000003">
    <property type="entry name" value="3-methyl-2-oxobutanoate hydroxymethyltransferase"/>
    <property type="match status" value="1"/>
</dbReference>
<dbReference type="Gene3D" id="3.20.20.60">
    <property type="entry name" value="Phosphoenolpyruvate-binding domains"/>
    <property type="match status" value="1"/>
</dbReference>
<dbReference type="HAMAP" id="MF_00156">
    <property type="entry name" value="PanB"/>
    <property type="match status" value="1"/>
</dbReference>
<dbReference type="InterPro" id="IPR003700">
    <property type="entry name" value="Pantoate_hydroxy_MeTrfase"/>
</dbReference>
<dbReference type="InterPro" id="IPR015813">
    <property type="entry name" value="Pyrv/PenolPyrv_kinase-like_dom"/>
</dbReference>
<dbReference type="InterPro" id="IPR040442">
    <property type="entry name" value="Pyrv_kinase-like_dom_sf"/>
</dbReference>
<dbReference type="NCBIfam" id="TIGR00222">
    <property type="entry name" value="panB"/>
    <property type="match status" value="1"/>
</dbReference>
<dbReference type="NCBIfam" id="NF001452">
    <property type="entry name" value="PRK00311.1"/>
    <property type="match status" value="1"/>
</dbReference>
<dbReference type="PANTHER" id="PTHR20881">
    <property type="entry name" value="3-METHYL-2-OXOBUTANOATE HYDROXYMETHYLTRANSFERASE"/>
    <property type="match status" value="1"/>
</dbReference>
<dbReference type="PANTHER" id="PTHR20881:SF0">
    <property type="entry name" value="3-METHYL-2-OXOBUTANOATE HYDROXYMETHYLTRANSFERASE"/>
    <property type="match status" value="1"/>
</dbReference>
<dbReference type="Pfam" id="PF02548">
    <property type="entry name" value="Pantoate_transf"/>
    <property type="match status" value="1"/>
</dbReference>
<dbReference type="PIRSF" id="PIRSF000388">
    <property type="entry name" value="Pantoate_hydroxy_MeTrfase"/>
    <property type="match status" value="1"/>
</dbReference>
<dbReference type="SUPFAM" id="SSF51621">
    <property type="entry name" value="Phosphoenolpyruvate/pyruvate domain"/>
    <property type="match status" value="1"/>
</dbReference>